<accession>Q57MH8</accession>
<evidence type="ECO:0000255" key="1">
    <source>
        <dbReference type="HAMAP-Rule" id="MF_01362"/>
    </source>
</evidence>
<protein>
    <recommendedName>
        <fullName evidence="1">UPF0387 membrane protein YohO</fullName>
    </recommendedName>
</protein>
<gene>
    <name evidence="1" type="primary">yohO</name>
    <name type="ordered locus">SCH_2177</name>
</gene>
<proteinExistence type="inferred from homology"/>
<dbReference type="EMBL" id="AE017220">
    <property type="protein sequence ID" value="AAX66083.1"/>
    <property type="molecule type" value="Genomic_DNA"/>
</dbReference>
<dbReference type="RefSeq" id="WP_001261696.1">
    <property type="nucleotide sequence ID" value="NC_006905.1"/>
</dbReference>
<dbReference type="KEGG" id="sec:SCH_2177"/>
<dbReference type="HOGENOM" id="CLU_220259_0_0_6"/>
<dbReference type="Proteomes" id="UP000000538">
    <property type="component" value="Chromosome"/>
</dbReference>
<dbReference type="GO" id="GO:0005886">
    <property type="term" value="C:plasma membrane"/>
    <property type="evidence" value="ECO:0007669"/>
    <property type="project" value="UniProtKB-SubCell"/>
</dbReference>
<dbReference type="HAMAP" id="MF_01362">
    <property type="entry name" value="UPF0387"/>
    <property type="match status" value="1"/>
</dbReference>
<dbReference type="InterPro" id="IPR020870">
    <property type="entry name" value="UPF0387_membrane"/>
</dbReference>
<dbReference type="NCBIfam" id="NF010225">
    <property type="entry name" value="PRK13681.1"/>
    <property type="match status" value="1"/>
</dbReference>
<sequence length="35" mass="3580">MRVAKIGVIALFLLMAIGGIGGVMLAGYSFILRAG</sequence>
<comment type="subcellular location">
    <subcellularLocation>
        <location evidence="1">Cell inner membrane</location>
        <topology evidence="1">Single-pass membrane protein</topology>
    </subcellularLocation>
</comment>
<comment type="similarity">
    <text evidence="1">Belongs to the UPF0387 family.</text>
</comment>
<organism>
    <name type="scientific">Salmonella choleraesuis (strain SC-B67)</name>
    <dbReference type="NCBI Taxonomy" id="321314"/>
    <lineage>
        <taxon>Bacteria</taxon>
        <taxon>Pseudomonadati</taxon>
        <taxon>Pseudomonadota</taxon>
        <taxon>Gammaproteobacteria</taxon>
        <taxon>Enterobacterales</taxon>
        <taxon>Enterobacteriaceae</taxon>
        <taxon>Salmonella</taxon>
    </lineage>
</organism>
<keyword id="KW-0997">Cell inner membrane</keyword>
<keyword id="KW-1003">Cell membrane</keyword>
<keyword id="KW-0472">Membrane</keyword>
<keyword id="KW-0812">Transmembrane</keyword>
<keyword id="KW-1133">Transmembrane helix</keyword>
<feature type="chain" id="PRO_0000252197" description="UPF0387 membrane protein YohO">
    <location>
        <begin position="1"/>
        <end position="35"/>
    </location>
</feature>
<feature type="transmembrane region" description="Helical" evidence="1">
    <location>
        <begin position="6"/>
        <end position="26"/>
    </location>
</feature>
<reference key="1">
    <citation type="journal article" date="2005" name="Nucleic Acids Res.">
        <title>The genome sequence of Salmonella enterica serovar Choleraesuis, a highly invasive and resistant zoonotic pathogen.</title>
        <authorList>
            <person name="Chiu C.-H."/>
            <person name="Tang P."/>
            <person name="Chu C."/>
            <person name="Hu S."/>
            <person name="Bao Q."/>
            <person name="Yu J."/>
            <person name="Chou Y.-Y."/>
            <person name="Wang H.-S."/>
            <person name="Lee Y.-S."/>
        </authorList>
    </citation>
    <scope>NUCLEOTIDE SEQUENCE [LARGE SCALE GENOMIC DNA]</scope>
    <source>
        <strain>SC-B67</strain>
    </source>
</reference>
<name>YOHO_SALCH</name>